<reference key="1">
    <citation type="journal article" date="1990" name="Nucleic Acids Res.">
        <title>Nucleotide sequence of an intermediate filament cDNA from Torpedo californica.</title>
        <authorList>
            <person name="Frail D.E."/>
            <person name="Mudd J."/>
            <person name="Merlie J.P."/>
        </authorList>
    </citation>
    <scope>NUCLEOTIDE SEQUENCE [MRNA]</scope>
</reference>
<name>IF3T_TETCF</name>
<dbReference type="EMBL" id="X51533">
    <property type="protein sequence ID" value="CAA35912.1"/>
    <property type="molecule type" value="mRNA"/>
</dbReference>
<dbReference type="PIR" id="S09228">
    <property type="entry name" value="S09228"/>
</dbReference>
<dbReference type="SMR" id="P23729"/>
<dbReference type="GO" id="GO:0005737">
    <property type="term" value="C:cytoplasm"/>
    <property type="evidence" value="ECO:0007669"/>
    <property type="project" value="TreeGrafter"/>
</dbReference>
<dbReference type="GO" id="GO:0005882">
    <property type="term" value="C:intermediate filament"/>
    <property type="evidence" value="ECO:0007669"/>
    <property type="project" value="UniProtKB-KW"/>
</dbReference>
<dbReference type="GO" id="GO:0005200">
    <property type="term" value="F:structural constituent of cytoskeleton"/>
    <property type="evidence" value="ECO:0007669"/>
    <property type="project" value="TreeGrafter"/>
</dbReference>
<dbReference type="GO" id="GO:0045109">
    <property type="term" value="P:intermediate filament organization"/>
    <property type="evidence" value="ECO:0007669"/>
    <property type="project" value="TreeGrafter"/>
</dbReference>
<dbReference type="FunFam" id="1.20.5.1160:FF:000001">
    <property type="entry name" value="Keratin type II"/>
    <property type="match status" value="1"/>
</dbReference>
<dbReference type="FunFam" id="1.20.5.170:FF:000002">
    <property type="entry name" value="Type I keratin KA11"/>
    <property type="match status" value="1"/>
</dbReference>
<dbReference type="FunFam" id="1.20.5.500:FF:000001">
    <property type="entry name" value="Type II keratin 23"/>
    <property type="match status" value="1"/>
</dbReference>
<dbReference type="Gene3D" id="1.20.5.170">
    <property type="match status" value="1"/>
</dbReference>
<dbReference type="Gene3D" id="1.20.5.500">
    <property type="entry name" value="Single helix bin"/>
    <property type="match status" value="1"/>
</dbReference>
<dbReference type="Gene3D" id="1.20.5.1160">
    <property type="entry name" value="Vasodilator-stimulated phosphoprotein"/>
    <property type="match status" value="1"/>
</dbReference>
<dbReference type="InterPro" id="IPR018039">
    <property type="entry name" value="IF_conserved"/>
</dbReference>
<dbReference type="InterPro" id="IPR039008">
    <property type="entry name" value="IF_rod_dom"/>
</dbReference>
<dbReference type="InterPro" id="IPR006821">
    <property type="entry name" value="Intermed_filament_DNA-bd"/>
</dbReference>
<dbReference type="InterPro" id="IPR050405">
    <property type="entry name" value="Intermediate_filament"/>
</dbReference>
<dbReference type="InterPro" id="IPR002957">
    <property type="entry name" value="Keratin_I"/>
</dbReference>
<dbReference type="PANTHER" id="PTHR45652">
    <property type="entry name" value="GLIAL FIBRILLARY ACIDIC PROTEIN"/>
    <property type="match status" value="1"/>
</dbReference>
<dbReference type="PANTHER" id="PTHR45652:SF21">
    <property type="entry name" value="ZINC FINGER CCCH DOMAIN-CONTAINING PROTEIN 13-LIKE ISOFORM X1"/>
    <property type="match status" value="1"/>
</dbReference>
<dbReference type="Pfam" id="PF00038">
    <property type="entry name" value="Filament"/>
    <property type="match status" value="1"/>
</dbReference>
<dbReference type="Pfam" id="PF04732">
    <property type="entry name" value="Filament_head"/>
    <property type="match status" value="1"/>
</dbReference>
<dbReference type="PRINTS" id="PR01248">
    <property type="entry name" value="TYPE1KERATIN"/>
</dbReference>
<dbReference type="SMART" id="SM01391">
    <property type="entry name" value="Filament"/>
    <property type="match status" value="1"/>
</dbReference>
<dbReference type="SUPFAM" id="SSF64593">
    <property type="entry name" value="Intermediate filament protein, coiled coil region"/>
    <property type="match status" value="2"/>
</dbReference>
<dbReference type="PROSITE" id="PS00226">
    <property type="entry name" value="IF_ROD_1"/>
    <property type="match status" value="1"/>
</dbReference>
<dbReference type="PROSITE" id="PS51842">
    <property type="entry name" value="IF_ROD_2"/>
    <property type="match status" value="1"/>
</dbReference>
<accession>P23729</accession>
<feature type="chain" id="PRO_0000063809" description="Type III intermediate filament">
    <location>
        <begin position="1"/>
        <end position="458"/>
    </location>
</feature>
<feature type="domain" description="IF rod" evidence="1">
    <location>
        <begin position="97"/>
        <end position="405"/>
    </location>
</feature>
<feature type="region of interest" description="Head">
    <location>
        <begin position="1"/>
        <end position="100"/>
    </location>
</feature>
<feature type="region of interest" description="Tail">
    <location>
        <begin position="406"/>
        <end position="458"/>
    </location>
</feature>
<protein>
    <recommendedName>
        <fullName>Type III intermediate filament</fullName>
    </recommendedName>
</protein>
<organism>
    <name type="scientific">Tetronarce californica</name>
    <name type="common">Pacific electric ray</name>
    <name type="synonym">Torpedo californica</name>
    <dbReference type="NCBI Taxonomy" id="7787"/>
    <lineage>
        <taxon>Eukaryota</taxon>
        <taxon>Metazoa</taxon>
        <taxon>Chordata</taxon>
        <taxon>Craniata</taxon>
        <taxon>Vertebrata</taxon>
        <taxon>Chondrichthyes</taxon>
        <taxon>Elasmobranchii</taxon>
        <taxon>Batoidea</taxon>
        <taxon>Torpediniformes</taxon>
        <taxon>Torpedinidae</taxon>
        <taxon>Tetronarce</taxon>
    </lineage>
</organism>
<evidence type="ECO:0000255" key="1">
    <source>
        <dbReference type="PROSITE-ProRule" id="PRU01188"/>
    </source>
</evidence>
<proteinExistence type="evidence at transcript level"/>
<sequence length="458" mass="52819">MEKGYKMNRSSVYRNMFSEKPVRVSSIRRSYTARGNPQGSLIIPSSSRSRVSYVTPISSRSVRLVRSSAPVVASSSNLDFTLVDAMNSEFKVNRTNEKAEMIELNDRLANFLDKVRSLEQQNKMLLAELEQVKGKRPSKIGDLYEQELRELRLQIDQISNEKSRVEVERDNLADDLQKLREKLQDEVIQREDAENNLAAFRQDVDDACLARLDLERKVETLQEEIMFLKKLHEEEIIELQAQIRDSQFKVEMDVVRPDLTAALQDVRSQFDKLASKNIAETEELYKSKLADITDSASRNNDALRLAKQENNEYRRQVQSLTCEIDALKGTNESLERQMQDVEDRYNMETTNAQDTISHLEDEISHLKDEMTRHLQEYQELLTVKMALDVEIATYRKLLEGEENRISMPLPSFGSMSLSDAMFEQQPFENRTSKKKIVIKTVETSGGDVISETTQKIED</sequence>
<comment type="similarity">
    <text evidence="1">Belongs to the intermediate filament family.</text>
</comment>
<keyword id="KW-0175">Coiled coil</keyword>
<keyword id="KW-0403">Intermediate filament</keyword>